<organism>
    <name type="scientific">Streptomyces avermitilis (strain ATCC 31267 / DSM 46492 / JCM 5070 / NBRC 14893 / NCIMB 12804 / NRRL 8165 / MA-4680)</name>
    <dbReference type="NCBI Taxonomy" id="227882"/>
    <lineage>
        <taxon>Bacteria</taxon>
        <taxon>Bacillati</taxon>
        <taxon>Actinomycetota</taxon>
        <taxon>Actinomycetes</taxon>
        <taxon>Kitasatosporales</taxon>
        <taxon>Streptomycetaceae</taxon>
        <taxon>Streptomyces</taxon>
    </lineage>
</organism>
<feature type="chain" id="PRO_0000337558" description="Elongation factor Tu 2">
    <location>
        <begin position="1"/>
        <end position="390"/>
    </location>
</feature>
<feature type="domain" description="tr-type G">
    <location>
        <begin position="10"/>
        <end position="203"/>
    </location>
</feature>
<feature type="region of interest" description="G1" evidence="1">
    <location>
        <begin position="19"/>
        <end position="26"/>
    </location>
</feature>
<feature type="region of interest" description="G2" evidence="1">
    <location>
        <begin position="60"/>
        <end position="64"/>
    </location>
</feature>
<feature type="region of interest" description="G3" evidence="1">
    <location>
        <begin position="81"/>
        <end position="84"/>
    </location>
</feature>
<feature type="region of interest" description="G4" evidence="1">
    <location>
        <begin position="136"/>
        <end position="139"/>
    </location>
</feature>
<feature type="region of interest" description="G5" evidence="1">
    <location>
        <begin position="173"/>
        <end position="175"/>
    </location>
</feature>
<feature type="binding site" evidence="2">
    <location>
        <begin position="19"/>
        <end position="26"/>
    </location>
    <ligand>
        <name>GTP</name>
        <dbReference type="ChEBI" id="CHEBI:37565"/>
    </ligand>
</feature>
<feature type="binding site" evidence="2">
    <location>
        <position position="26"/>
    </location>
    <ligand>
        <name>Mg(2+)</name>
        <dbReference type="ChEBI" id="CHEBI:18420"/>
    </ligand>
</feature>
<feature type="binding site" evidence="2">
    <location>
        <begin position="81"/>
        <end position="85"/>
    </location>
    <ligand>
        <name>GTP</name>
        <dbReference type="ChEBI" id="CHEBI:37565"/>
    </ligand>
</feature>
<feature type="binding site" evidence="2">
    <location>
        <begin position="136"/>
        <end position="139"/>
    </location>
    <ligand>
        <name>GTP</name>
        <dbReference type="ChEBI" id="CHEBI:37565"/>
    </ligand>
</feature>
<evidence type="ECO:0000250" key="1"/>
<evidence type="ECO:0000255" key="2">
    <source>
        <dbReference type="HAMAP-Rule" id="MF_00118"/>
    </source>
</evidence>
<sequence length="390" mass="41403">MPKTAYVRTKPHLNIGTMGHVDHGKTTLTAAITKVLAERGSGTFVPFDRIDRAPEEAARGITINIAHVEYETDTRHYAHVDMPGHADYVKNMVTGAAQLDGAILVVSALDGIMPQTAEHVLLARQVGVDHIVVALNKADAGDEELTDLVELEVRELLTAHGYGGDSVPVVRVSGLKALEGDPRWTAAIDALLDAVDTYVPMPERYVDAPFLLPVENVLTITGRGTVVTGAVERGTIRVGDRVDVLGASVETVVTGLETFGKPMEEAQAGDNVALLLRGVPRDAVRRGHIVAAPGSVVPSRRFSARVYVLSTREGGRTTPVATGYRPQFYIRTADVVGDVDLGETAVARPGDTVTMTVSLGRDVPLEPGLGFAIREGGRTVGAGTVTTVED</sequence>
<proteinExistence type="inferred from homology"/>
<accession>Q826Z7</accession>
<keyword id="KW-0963">Cytoplasm</keyword>
<keyword id="KW-0251">Elongation factor</keyword>
<keyword id="KW-0342">GTP-binding</keyword>
<keyword id="KW-0378">Hydrolase</keyword>
<keyword id="KW-0460">Magnesium</keyword>
<keyword id="KW-0479">Metal-binding</keyword>
<keyword id="KW-0547">Nucleotide-binding</keyword>
<keyword id="KW-0648">Protein biosynthesis</keyword>
<keyword id="KW-1185">Reference proteome</keyword>
<comment type="function">
    <text evidence="2">GTP hydrolase that promotes the GTP-dependent binding of aminoacyl-tRNA to the A-site of ribosomes during protein biosynthesis.</text>
</comment>
<comment type="catalytic activity">
    <reaction evidence="2">
        <text>GTP + H2O = GDP + phosphate + H(+)</text>
        <dbReference type="Rhea" id="RHEA:19669"/>
        <dbReference type="ChEBI" id="CHEBI:15377"/>
        <dbReference type="ChEBI" id="CHEBI:15378"/>
        <dbReference type="ChEBI" id="CHEBI:37565"/>
        <dbReference type="ChEBI" id="CHEBI:43474"/>
        <dbReference type="ChEBI" id="CHEBI:58189"/>
        <dbReference type="EC" id="3.6.5.3"/>
    </reaction>
    <physiologicalReaction direction="left-to-right" evidence="2">
        <dbReference type="Rhea" id="RHEA:19670"/>
    </physiologicalReaction>
</comment>
<comment type="subunit">
    <text evidence="2">Monomer.</text>
</comment>
<comment type="subcellular location">
    <subcellularLocation>
        <location evidence="2">Cytoplasm</location>
    </subcellularLocation>
</comment>
<comment type="similarity">
    <text evidence="2">Belongs to the TRAFAC class translation factor GTPase superfamily. Classic translation factor GTPase family. EF-Tu/EF-1A subfamily.</text>
</comment>
<name>EFTU2_STRAW</name>
<dbReference type="EC" id="3.6.5.3" evidence="2"/>
<dbReference type="EMBL" id="BA000030">
    <property type="protein sequence ID" value="BAC74739.1"/>
    <property type="molecule type" value="Genomic_DNA"/>
</dbReference>
<dbReference type="SMR" id="Q826Z7"/>
<dbReference type="GeneID" id="41544103"/>
<dbReference type="KEGG" id="sma:SAVERM_7028"/>
<dbReference type="eggNOG" id="COG0050">
    <property type="taxonomic scope" value="Bacteria"/>
</dbReference>
<dbReference type="HOGENOM" id="CLU_007265_0_0_11"/>
<dbReference type="OrthoDB" id="9803139at2"/>
<dbReference type="Proteomes" id="UP000000428">
    <property type="component" value="Chromosome"/>
</dbReference>
<dbReference type="GO" id="GO:0005829">
    <property type="term" value="C:cytosol"/>
    <property type="evidence" value="ECO:0007669"/>
    <property type="project" value="TreeGrafter"/>
</dbReference>
<dbReference type="GO" id="GO:0005525">
    <property type="term" value="F:GTP binding"/>
    <property type="evidence" value="ECO:0007669"/>
    <property type="project" value="UniProtKB-UniRule"/>
</dbReference>
<dbReference type="GO" id="GO:0003924">
    <property type="term" value="F:GTPase activity"/>
    <property type="evidence" value="ECO:0007669"/>
    <property type="project" value="InterPro"/>
</dbReference>
<dbReference type="GO" id="GO:0003746">
    <property type="term" value="F:translation elongation factor activity"/>
    <property type="evidence" value="ECO:0007669"/>
    <property type="project" value="UniProtKB-UniRule"/>
</dbReference>
<dbReference type="CDD" id="cd01884">
    <property type="entry name" value="EF_Tu"/>
    <property type="match status" value="1"/>
</dbReference>
<dbReference type="CDD" id="cd03707">
    <property type="entry name" value="EFTU_III"/>
    <property type="match status" value="1"/>
</dbReference>
<dbReference type="FunFam" id="2.40.30.10:FF:000085">
    <property type="entry name" value="Elongation factor Tu"/>
    <property type="match status" value="1"/>
</dbReference>
<dbReference type="FunFam" id="2.40.30.10:FF:000124">
    <property type="entry name" value="Elongation factor Tu"/>
    <property type="match status" value="1"/>
</dbReference>
<dbReference type="FunFam" id="3.40.50.300:FF:000576">
    <property type="entry name" value="Elongation factor Tu"/>
    <property type="match status" value="1"/>
</dbReference>
<dbReference type="Gene3D" id="3.40.50.300">
    <property type="entry name" value="P-loop containing nucleotide triphosphate hydrolases"/>
    <property type="match status" value="1"/>
</dbReference>
<dbReference type="Gene3D" id="2.40.30.10">
    <property type="entry name" value="Translation factors"/>
    <property type="match status" value="2"/>
</dbReference>
<dbReference type="HAMAP" id="MF_00118_B">
    <property type="entry name" value="EF_Tu_B"/>
    <property type="match status" value="1"/>
</dbReference>
<dbReference type="InterPro" id="IPR041709">
    <property type="entry name" value="EF-Tu_GTP-bd"/>
</dbReference>
<dbReference type="InterPro" id="IPR050055">
    <property type="entry name" value="EF-Tu_GTPase"/>
</dbReference>
<dbReference type="InterPro" id="IPR004161">
    <property type="entry name" value="EFTu-like_2"/>
</dbReference>
<dbReference type="InterPro" id="IPR031157">
    <property type="entry name" value="G_TR_CS"/>
</dbReference>
<dbReference type="InterPro" id="IPR027417">
    <property type="entry name" value="P-loop_NTPase"/>
</dbReference>
<dbReference type="InterPro" id="IPR005225">
    <property type="entry name" value="Small_GTP-bd"/>
</dbReference>
<dbReference type="InterPro" id="IPR000795">
    <property type="entry name" value="T_Tr_GTP-bd_dom"/>
</dbReference>
<dbReference type="InterPro" id="IPR009000">
    <property type="entry name" value="Transl_B-barrel_sf"/>
</dbReference>
<dbReference type="InterPro" id="IPR009001">
    <property type="entry name" value="Transl_elong_EF1A/Init_IF2_C"/>
</dbReference>
<dbReference type="InterPro" id="IPR004541">
    <property type="entry name" value="Transl_elong_EFTu/EF1A_bac/org"/>
</dbReference>
<dbReference type="InterPro" id="IPR004160">
    <property type="entry name" value="Transl_elong_EFTu/EF1A_C"/>
</dbReference>
<dbReference type="NCBIfam" id="TIGR00485">
    <property type="entry name" value="EF-Tu"/>
    <property type="match status" value="1"/>
</dbReference>
<dbReference type="NCBIfam" id="NF000766">
    <property type="entry name" value="PRK00049.1"/>
    <property type="match status" value="1"/>
</dbReference>
<dbReference type="NCBIfam" id="NF009372">
    <property type="entry name" value="PRK12735.1"/>
    <property type="match status" value="1"/>
</dbReference>
<dbReference type="NCBIfam" id="NF009373">
    <property type="entry name" value="PRK12736.1"/>
    <property type="match status" value="1"/>
</dbReference>
<dbReference type="NCBIfam" id="TIGR00231">
    <property type="entry name" value="small_GTP"/>
    <property type="match status" value="1"/>
</dbReference>
<dbReference type="PANTHER" id="PTHR43721:SF22">
    <property type="entry name" value="ELONGATION FACTOR TU, MITOCHONDRIAL"/>
    <property type="match status" value="1"/>
</dbReference>
<dbReference type="PANTHER" id="PTHR43721">
    <property type="entry name" value="ELONGATION FACTOR TU-RELATED"/>
    <property type="match status" value="1"/>
</dbReference>
<dbReference type="Pfam" id="PF00009">
    <property type="entry name" value="GTP_EFTU"/>
    <property type="match status" value="1"/>
</dbReference>
<dbReference type="Pfam" id="PF03144">
    <property type="entry name" value="GTP_EFTU_D2"/>
    <property type="match status" value="1"/>
</dbReference>
<dbReference type="Pfam" id="PF03143">
    <property type="entry name" value="GTP_EFTU_D3"/>
    <property type="match status" value="1"/>
</dbReference>
<dbReference type="PRINTS" id="PR00315">
    <property type="entry name" value="ELONGATNFCT"/>
</dbReference>
<dbReference type="SUPFAM" id="SSF50465">
    <property type="entry name" value="EF-Tu/eEF-1alpha/eIF2-gamma C-terminal domain"/>
    <property type="match status" value="1"/>
</dbReference>
<dbReference type="SUPFAM" id="SSF52540">
    <property type="entry name" value="P-loop containing nucleoside triphosphate hydrolases"/>
    <property type="match status" value="1"/>
</dbReference>
<dbReference type="SUPFAM" id="SSF50447">
    <property type="entry name" value="Translation proteins"/>
    <property type="match status" value="1"/>
</dbReference>
<dbReference type="PROSITE" id="PS00301">
    <property type="entry name" value="G_TR_1"/>
    <property type="match status" value="1"/>
</dbReference>
<dbReference type="PROSITE" id="PS51722">
    <property type="entry name" value="G_TR_2"/>
    <property type="match status" value="1"/>
</dbReference>
<protein>
    <recommendedName>
        <fullName evidence="2">Elongation factor Tu 2</fullName>
        <shortName evidence="2">EF-Tu 2</shortName>
        <ecNumber evidence="2">3.6.5.3</ecNumber>
    </recommendedName>
</protein>
<gene>
    <name evidence="2" type="primary">tuf2</name>
    <name type="synonym">tufA2</name>
    <name type="ordered locus">SAV_7028</name>
</gene>
<reference key="1">
    <citation type="journal article" date="2003" name="Nat. Biotechnol.">
        <title>Complete genome sequence and comparative analysis of the industrial microorganism Streptomyces avermitilis.</title>
        <authorList>
            <person name="Ikeda H."/>
            <person name="Ishikawa J."/>
            <person name="Hanamoto A."/>
            <person name="Shinose M."/>
            <person name="Kikuchi H."/>
            <person name="Shiba T."/>
            <person name="Sakaki Y."/>
            <person name="Hattori M."/>
            <person name="Omura S."/>
        </authorList>
    </citation>
    <scope>NUCLEOTIDE SEQUENCE [LARGE SCALE GENOMIC DNA]</scope>
    <source>
        <strain>ATCC 31267 / DSM 46492 / JCM 5070 / NBRC 14893 / NCIMB 12804 / NRRL 8165 / MA-4680</strain>
    </source>
</reference>
<reference key="2">
    <citation type="journal article" date="2001" name="Proc. Natl. Acad. Sci. U.S.A.">
        <title>Genome sequence of an industrial microorganism Streptomyces avermitilis: deducing the ability of producing secondary metabolites.</title>
        <authorList>
            <person name="Omura S."/>
            <person name="Ikeda H."/>
            <person name="Ishikawa J."/>
            <person name="Hanamoto A."/>
            <person name="Takahashi C."/>
            <person name="Shinose M."/>
            <person name="Takahashi Y."/>
            <person name="Horikawa H."/>
            <person name="Nakazawa H."/>
            <person name="Osonoe T."/>
            <person name="Kikuchi H."/>
            <person name="Shiba T."/>
            <person name="Sakaki Y."/>
            <person name="Hattori M."/>
        </authorList>
    </citation>
    <scope>NUCLEOTIDE SEQUENCE [LARGE SCALE GENOMIC DNA]</scope>
    <source>
        <strain>ATCC 31267 / DSM 46492 / JCM 5070 / NBRC 14893 / NCIMB 12804 / NRRL 8165 / MA-4680</strain>
    </source>
</reference>